<accession>Q6FR30</accession>
<gene>
    <name type="primary">ISY1</name>
    <name type="ordered locus">CAGL0I01364g</name>
</gene>
<sequence>MSRNVDKSQTVLALYQEHKAESRRDYNRYKRPRVESVRDPAEAREWYKQTLREVGECTNRLYDPLLSEEQVRECNARVNQLIQESQRWSRHLRRFKQRQRPPVYGGVVVNGVRYIGRARELPEARKRPTAARQFTVKRAKYVDFSDNGDFSDNGDYRGTSERLRKAHGIAQQESVLVEPPTQQQMEEYLVERRKRQLLHQLNL</sequence>
<keyword id="KW-0963">Cytoplasm</keyword>
<keyword id="KW-0507">mRNA processing</keyword>
<keyword id="KW-0508">mRNA splicing</keyword>
<keyword id="KW-0539">Nucleus</keyword>
<keyword id="KW-1185">Reference proteome</keyword>
<keyword id="KW-0747">Spliceosome</keyword>
<comment type="function">
    <text evidence="1">Involved in pre-mRNA splicing.</text>
</comment>
<comment type="subunit">
    <text evidence="1">Associated with the spliceosome.</text>
</comment>
<comment type="subcellular location">
    <subcellularLocation>
        <location evidence="1">Cytoplasm</location>
    </subcellularLocation>
    <subcellularLocation>
        <location evidence="1">Nucleus</location>
    </subcellularLocation>
</comment>
<comment type="similarity">
    <text evidence="2">Belongs to the ISY1 family.</text>
</comment>
<organism>
    <name type="scientific">Candida glabrata (strain ATCC 2001 / BCRC 20586 / JCM 3761 / NBRC 0622 / NRRL Y-65 / CBS 138)</name>
    <name type="common">Yeast</name>
    <name type="synonym">Nakaseomyces glabratus</name>
    <dbReference type="NCBI Taxonomy" id="284593"/>
    <lineage>
        <taxon>Eukaryota</taxon>
        <taxon>Fungi</taxon>
        <taxon>Dikarya</taxon>
        <taxon>Ascomycota</taxon>
        <taxon>Saccharomycotina</taxon>
        <taxon>Saccharomycetes</taxon>
        <taxon>Saccharomycetales</taxon>
        <taxon>Saccharomycetaceae</taxon>
        <taxon>Nakaseomyces</taxon>
    </lineage>
</organism>
<evidence type="ECO:0000250" key="1"/>
<evidence type="ECO:0000305" key="2"/>
<protein>
    <recommendedName>
        <fullName>Pre-mRNA-splicing factor ISY1</fullName>
    </recommendedName>
</protein>
<proteinExistence type="inferred from homology"/>
<feature type="chain" id="PRO_0000192966" description="Pre-mRNA-splicing factor ISY1">
    <location>
        <begin position="1"/>
        <end position="203"/>
    </location>
</feature>
<dbReference type="EMBL" id="CR380955">
    <property type="protein sequence ID" value="CAG60251.1"/>
    <property type="molecule type" value="Genomic_DNA"/>
</dbReference>
<dbReference type="RefSeq" id="XP_447314.1">
    <property type="nucleotide sequence ID" value="XM_447314.1"/>
</dbReference>
<dbReference type="SMR" id="Q6FR30"/>
<dbReference type="FunCoup" id="Q6FR30">
    <property type="interactions" value="263"/>
</dbReference>
<dbReference type="STRING" id="284593.Q6FR30"/>
<dbReference type="EnsemblFungi" id="CAGL0I01364g-T">
    <property type="protein sequence ID" value="CAGL0I01364g-T-p1"/>
    <property type="gene ID" value="CAGL0I01364g"/>
</dbReference>
<dbReference type="KEGG" id="cgr:2889122"/>
<dbReference type="CGD" id="CAL0132670">
    <property type="gene designation" value="CAGL0I01364g"/>
</dbReference>
<dbReference type="VEuPathDB" id="FungiDB:CAGL0I01364g"/>
<dbReference type="eggNOG" id="KOG3068">
    <property type="taxonomic scope" value="Eukaryota"/>
</dbReference>
<dbReference type="HOGENOM" id="CLU_043453_2_1_1"/>
<dbReference type="InParanoid" id="Q6FR30"/>
<dbReference type="Proteomes" id="UP000002428">
    <property type="component" value="Chromosome I"/>
</dbReference>
<dbReference type="GO" id="GO:0005737">
    <property type="term" value="C:cytoplasm"/>
    <property type="evidence" value="ECO:0007669"/>
    <property type="project" value="UniProtKB-SubCell"/>
</dbReference>
<dbReference type="GO" id="GO:0005681">
    <property type="term" value="C:spliceosomal complex"/>
    <property type="evidence" value="ECO:0007669"/>
    <property type="project" value="UniProtKB-KW"/>
</dbReference>
<dbReference type="GO" id="GO:0000350">
    <property type="term" value="P:generation of catalytic spliceosome for second transesterification step"/>
    <property type="evidence" value="ECO:0007669"/>
    <property type="project" value="InterPro"/>
</dbReference>
<dbReference type="Gene3D" id="1.10.287.660">
    <property type="entry name" value="Helix hairpin bin"/>
    <property type="match status" value="1"/>
</dbReference>
<dbReference type="InterPro" id="IPR029012">
    <property type="entry name" value="Helix_hairpin_bin_sf"/>
</dbReference>
<dbReference type="InterPro" id="IPR009360">
    <property type="entry name" value="Isy1"/>
</dbReference>
<dbReference type="InterPro" id="IPR037200">
    <property type="entry name" value="Isy1_sf"/>
</dbReference>
<dbReference type="PANTHER" id="PTHR13021">
    <property type="entry name" value="PRE-MRNA-SPLICING FACTOR ISY1"/>
    <property type="match status" value="1"/>
</dbReference>
<dbReference type="Pfam" id="PF06246">
    <property type="entry name" value="Isy1"/>
    <property type="match status" value="1"/>
</dbReference>
<dbReference type="SUPFAM" id="SSF140102">
    <property type="entry name" value="ISY1 domain-like"/>
    <property type="match status" value="1"/>
</dbReference>
<name>ISY1_CANGA</name>
<reference key="1">
    <citation type="journal article" date="2004" name="Nature">
        <title>Genome evolution in yeasts.</title>
        <authorList>
            <person name="Dujon B."/>
            <person name="Sherman D."/>
            <person name="Fischer G."/>
            <person name="Durrens P."/>
            <person name="Casaregola S."/>
            <person name="Lafontaine I."/>
            <person name="de Montigny J."/>
            <person name="Marck C."/>
            <person name="Neuveglise C."/>
            <person name="Talla E."/>
            <person name="Goffard N."/>
            <person name="Frangeul L."/>
            <person name="Aigle M."/>
            <person name="Anthouard V."/>
            <person name="Babour A."/>
            <person name="Barbe V."/>
            <person name="Barnay S."/>
            <person name="Blanchin S."/>
            <person name="Beckerich J.-M."/>
            <person name="Beyne E."/>
            <person name="Bleykasten C."/>
            <person name="Boisrame A."/>
            <person name="Boyer J."/>
            <person name="Cattolico L."/>
            <person name="Confanioleri F."/>
            <person name="de Daruvar A."/>
            <person name="Despons L."/>
            <person name="Fabre E."/>
            <person name="Fairhead C."/>
            <person name="Ferry-Dumazet H."/>
            <person name="Groppi A."/>
            <person name="Hantraye F."/>
            <person name="Hennequin C."/>
            <person name="Jauniaux N."/>
            <person name="Joyet P."/>
            <person name="Kachouri R."/>
            <person name="Kerrest A."/>
            <person name="Koszul R."/>
            <person name="Lemaire M."/>
            <person name="Lesur I."/>
            <person name="Ma L."/>
            <person name="Muller H."/>
            <person name="Nicaud J.-M."/>
            <person name="Nikolski M."/>
            <person name="Oztas S."/>
            <person name="Ozier-Kalogeropoulos O."/>
            <person name="Pellenz S."/>
            <person name="Potier S."/>
            <person name="Richard G.-F."/>
            <person name="Straub M.-L."/>
            <person name="Suleau A."/>
            <person name="Swennen D."/>
            <person name="Tekaia F."/>
            <person name="Wesolowski-Louvel M."/>
            <person name="Westhof E."/>
            <person name="Wirth B."/>
            <person name="Zeniou-Meyer M."/>
            <person name="Zivanovic Y."/>
            <person name="Bolotin-Fukuhara M."/>
            <person name="Thierry A."/>
            <person name="Bouchier C."/>
            <person name="Caudron B."/>
            <person name="Scarpelli C."/>
            <person name="Gaillardin C."/>
            <person name="Weissenbach J."/>
            <person name="Wincker P."/>
            <person name="Souciet J.-L."/>
        </authorList>
    </citation>
    <scope>NUCLEOTIDE SEQUENCE [LARGE SCALE GENOMIC DNA]</scope>
    <source>
        <strain>ATCC 2001 / BCRC 20586 / JCM 3761 / NBRC 0622 / NRRL Y-65 / CBS 138</strain>
    </source>
</reference>